<feature type="chain" id="PRO_0000101051" description="Threonine--tRNA ligase">
    <location>
        <begin position="1"/>
        <end position="645"/>
    </location>
</feature>
<feature type="domain" description="TGS" evidence="2">
    <location>
        <begin position="1"/>
        <end position="63"/>
    </location>
</feature>
<feature type="region of interest" description="Catalytic" evidence="1">
    <location>
        <begin position="242"/>
        <end position="540"/>
    </location>
</feature>
<feature type="binding site" evidence="1">
    <location>
        <position position="336"/>
    </location>
    <ligand>
        <name>Zn(2+)</name>
        <dbReference type="ChEBI" id="CHEBI:29105"/>
    </ligand>
</feature>
<feature type="binding site" evidence="1">
    <location>
        <position position="387"/>
    </location>
    <ligand>
        <name>Zn(2+)</name>
        <dbReference type="ChEBI" id="CHEBI:29105"/>
    </ligand>
</feature>
<feature type="binding site" evidence="1">
    <location>
        <position position="517"/>
    </location>
    <ligand>
        <name>Zn(2+)</name>
        <dbReference type="ChEBI" id="CHEBI:29105"/>
    </ligand>
</feature>
<protein>
    <recommendedName>
        <fullName evidence="1">Threonine--tRNA ligase</fullName>
        <ecNumber evidence="1">6.1.1.3</ecNumber>
    </recommendedName>
    <alternativeName>
        <fullName evidence="1">Threonyl-tRNA synthetase</fullName>
        <shortName evidence="1">ThrRS</shortName>
    </alternativeName>
</protein>
<evidence type="ECO:0000255" key="1">
    <source>
        <dbReference type="HAMAP-Rule" id="MF_00184"/>
    </source>
</evidence>
<evidence type="ECO:0000255" key="2">
    <source>
        <dbReference type="PROSITE-ProRule" id="PRU01228"/>
    </source>
</evidence>
<proteinExistence type="inferred from homology"/>
<sequence length="645" mass="74460">MEQINIQFPDGNKKAFDKGTTTEDIAQSISPGLRKKAVAGKFNGQLVDLTKPLETDGSIEIVTPGSEEALEVLRHSTAHLMAHAIKRLYGNVKFGVGPVIEGGFYYDFDIDQNISSDDFEQIEKTMKQIVNENMKIERKVVSRDEAKELFSNDEYKLELIDAIPEDENVTLYSQGDFTDLCRGVHVPSTAKIKEFKLLSTAGAYWRGDSNNKMLQRIYGTAFFDKKELKAHLQMLEERKERDHRKIGKELELFTNSQLVGAGLPLWLPNGATIRREIERYIVDKEVSMGYDHVYTPVLANVDLYKTSGHWDHYQEDMFPPMQLDETESMVLRPMNCPHHMMIYANKPHSYRELPIRIAELGTMHRYEASGAVSGLQRVRGMTLNDSHIFVRPDQIKEEFKRVVNMIIDVYKDFGFEDYSFRLSYRDPEDKEKYFDDDDMWNKAENMLKEAADELGLSYEEAIGEAAFYGPKLDVQVKTAMGKEETLSTAQLDFLLPERFDLTYIGQDGEHHRPVVIHRGVVSTMERFVAFLTEETKGAFPTWLAPKQVQIIPVNVDLHYDYARQLQDELKSQGVRVSIDDRNEKMGYKIREAQMQKIPYQIVVGDKEVENNQVNVRQYGSQDQETVEKDEFIWNLVDEIRLKKHR</sequence>
<name>SYT_STAAS</name>
<organism>
    <name type="scientific">Staphylococcus aureus (strain MSSA476)</name>
    <dbReference type="NCBI Taxonomy" id="282459"/>
    <lineage>
        <taxon>Bacteria</taxon>
        <taxon>Bacillati</taxon>
        <taxon>Bacillota</taxon>
        <taxon>Bacilli</taxon>
        <taxon>Bacillales</taxon>
        <taxon>Staphylococcaceae</taxon>
        <taxon>Staphylococcus</taxon>
    </lineage>
</organism>
<reference key="1">
    <citation type="journal article" date="2004" name="Proc. Natl. Acad. Sci. U.S.A.">
        <title>Complete genomes of two clinical Staphylococcus aureus strains: evidence for the rapid evolution of virulence and drug resistance.</title>
        <authorList>
            <person name="Holden M.T.G."/>
            <person name="Feil E.J."/>
            <person name="Lindsay J.A."/>
            <person name="Peacock S.J."/>
            <person name="Day N.P.J."/>
            <person name="Enright M.C."/>
            <person name="Foster T.J."/>
            <person name="Moore C.E."/>
            <person name="Hurst L."/>
            <person name="Atkin R."/>
            <person name="Barron A."/>
            <person name="Bason N."/>
            <person name="Bentley S.D."/>
            <person name="Chillingworth C."/>
            <person name="Chillingworth T."/>
            <person name="Churcher C."/>
            <person name="Clark L."/>
            <person name="Corton C."/>
            <person name="Cronin A."/>
            <person name="Doggett J."/>
            <person name="Dowd L."/>
            <person name="Feltwell T."/>
            <person name="Hance Z."/>
            <person name="Harris B."/>
            <person name="Hauser H."/>
            <person name="Holroyd S."/>
            <person name="Jagels K."/>
            <person name="James K.D."/>
            <person name="Lennard N."/>
            <person name="Line A."/>
            <person name="Mayes R."/>
            <person name="Moule S."/>
            <person name="Mungall K."/>
            <person name="Ormond D."/>
            <person name="Quail M.A."/>
            <person name="Rabbinowitsch E."/>
            <person name="Rutherford K.M."/>
            <person name="Sanders M."/>
            <person name="Sharp S."/>
            <person name="Simmonds M."/>
            <person name="Stevens K."/>
            <person name="Whitehead S."/>
            <person name="Barrell B.G."/>
            <person name="Spratt B.G."/>
            <person name="Parkhill J."/>
        </authorList>
    </citation>
    <scope>NUCLEOTIDE SEQUENCE [LARGE SCALE GENOMIC DNA]</scope>
    <source>
        <strain>MSSA476</strain>
    </source>
</reference>
<dbReference type="EC" id="6.1.1.3" evidence="1"/>
<dbReference type="EMBL" id="BX571857">
    <property type="protein sequence ID" value="CAG43413.1"/>
    <property type="molecule type" value="Genomic_DNA"/>
</dbReference>
<dbReference type="RefSeq" id="WP_000435132.1">
    <property type="nucleotide sequence ID" value="NC_002953.3"/>
</dbReference>
<dbReference type="SMR" id="Q6G8P3"/>
<dbReference type="KEGG" id="sas:SAS1611"/>
<dbReference type="HOGENOM" id="CLU_008554_0_1_9"/>
<dbReference type="GO" id="GO:0005737">
    <property type="term" value="C:cytoplasm"/>
    <property type="evidence" value="ECO:0007669"/>
    <property type="project" value="UniProtKB-SubCell"/>
</dbReference>
<dbReference type="GO" id="GO:0005524">
    <property type="term" value="F:ATP binding"/>
    <property type="evidence" value="ECO:0007669"/>
    <property type="project" value="UniProtKB-UniRule"/>
</dbReference>
<dbReference type="GO" id="GO:0140096">
    <property type="term" value="F:catalytic activity, acting on a protein"/>
    <property type="evidence" value="ECO:0007669"/>
    <property type="project" value="UniProtKB-ARBA"/>
</dbReference>
<dbReference type="GO" id="GO:0046872">
    <property type="term" value="F:metal ion binding"/>
    <property type="evidence" value="ECO:0007669"/>
    <property type="project" value="UniProtKB-KW"/>
</dbReference>
<dbReference type="GO" id="GO:0004829">
    <property type="term" value="F:threonine-tRNA ligase activity"/>
    <property type="evidence" value="ECO:0007669"/>
    <property type="project" value="UniProtKB-UniRule"/>
</dbReference>
<dbReference type="GO" id="GO:0016740">
    <property type="term" value="F:transferase activity"/>
    <property type="evidence" value="ECO:0007669"/>
    <property type="project" value="UniProtKB-ARBA"/>
</dbReference>
<dbReference type="GO" id="GO:0000049">
    <property type="term" value="F:tRNA binding"/>
    <property type="evidence" value="ECO:0007669"/>
    <property type="project" value="UniProtKB-KW"/>
</dbReference>
<dbReference type="GO" id="GO:0006435">
    <property type="term" value="P:threonyl-tRNA aminoacylation"/>
    <property type="evidence" value="ECO:0007669"/>
    <property type="project" value="UniProtKB-UniRule"/>
</dbReference>
<dbReference type="CDD" id="cd01667">
    <property type="entry name" value="TGS_ThrRS"/>
    <property type="match status" value="1"/>
</dbReference>
<dbReference type="CDD" id="cd00860">
    <property type="entry name" value="ThrRS_anticodon"/>
    <property type="match status" value="1"/>
</dbReference>
<dbReference type="CDD" id="cd00771">
    <property type="entry name" value="ThrRS_core"/>
    <property type="match status" value="1"/>
</dbReference>
<dbReference type="FunFam" id="3.10.20.30:FF:000005">
    <property type="entry name" value="Threonine--tRNA ligase"/>
    <property type="match status" value="1"/>
</dbReference>
<dbReference type="FunFam" id="3.30.54.20:FF:000002">
    <property type="entry name" value="Threonine--tRNA ligase"/>
    <property type="match status" value="1"/>
</dbReference>
<dbReference type="FunFam" id="3.30.930.10:FF:000002">
    <property type="entry name" value="Threonine--tRNA ligase"/>
    <property type="match status" value="1"/>
</dbReference>
<dbReference type="FunFam" id="3.40.50.800:FF:000001">
    <property type="entry name" value="Threonine--tRNA ligase"/>
    <property type="match status" value="1"/>
</dbReference>
<dbReference type="FunFam" id="3.30.980.10:FF:000005">
    <property type="entry name" value="Threonyl-tRNA synthetase, mitochondrial"/>
    <property type="match status" value="1"/>
</dbReference>
<dbReference type="Gene3D" id="3.10.20.30">
    <property type="match status" value="1"/>
</dbReference>
<dbReference type="Gene3D" id="3.30.54.20">
    <property type="match status" value="1"/>
</dbReference>
<dbReference type="Gene3D" id="3.40.50.800">
    <property type="entry name" value="Anticodon-binding domain"/>
    <property type="match status" value="1"/>
</dbReference>
<dbReference type="Gene3D" id="3.30.930.10">
    <property type="entry name" value="Bira Bifunctional Protein, Domain 2"/>
    <property type="match status" value="1"/>
</dbReference>
<dbReference type="Gene3D" id="3.30.980.10">
    <property type="entry name" value="Threonyl-trna Synthetase, Chain A, domain 2"/>
    <property type="match status" value="1"/>
</dbReference>
<dbReference type="HAMAP" id="MF_00184">
    <property type="entry name" value="Thr_tRNA_synth"/>
    <property type="match status" value="1"/>
</dbReference>
<dbReference type="InterPro" id="IPR002314">
    <property type="entry name" value="aa-tRNA-synt_IIb"/>
</dbReference>
<dbReference type="InterPro" id="IPR006195">
    <property type="entry name" value="aa-tRNA-synth_II"/>
</dbReference>
<dbReference type="InterPro" id="IPR045864">
    <property type="entry name" value="aa-tRNA-synth_II/BPL/LPL"/>
</dbReference>
<dbReference type="InterPro" id="IPR004154">
    <property type="entry name" value="Anticodon-bd"/>
</dbReference>
<dbReference type="InterPro" id="IPR036621">
    <property type="entry name" value="Anticodon-bd_dom_sf"/>
</dbReference>
<dbReference type="InterPro" id="IPR012675">
    <property type="entry name" value="Beta-grasp_dom_sf"/>
</dbReference>
<dbReference type="InterPro" id="IPR004095">
    <property type="entry name" value="TGS"/>
</dbReference>
<dbReference type="InterPro" id="IPR012676">
    <property type="entry name" value="TGS-like"/>
</dbReference>
<dbReference type="InterPro" id="IPR002320">
    <property type="entry name" value="Thr-tRNA-ligase_IIa"/>
</dbReference>
<dbReference type="InterPro" id="IPR018163">
    <property type="entry name" value="Thr/Ala-tRNA-synth_IIc_edit"/>
</dbReference>
<dbReference type="InterPro" id="IPR047246">
    <property type="entry name" value="ThrRS_anticodon"/>
</dbReference>
<dbReference type="InterPro" id="IPR033728">
    <property type="entry name" value="ThrRS_core"/>
</dbReference>
<dbReference type="InterPro" id="IPR012947">
    <property type="entry name" value="tRNA_SAD"/>
</dbReference>
<dbReference type="NCBIfam" id="TIGR00418">
    <property type="entry name" value="thrS"/>
    <property type="match status" value="1"/>
</dbReference>
<dbReference type="PANTHER" id="PTHR11451:SF56">
    <property type="entry name" value="THREONINE--TRNA LIGASE 1"/>
    <property type="match status" value="1"/>
</dbReference>
<dbReference type="PANTHER" id="PTHR11451">
    <property type="entry name" value="THREONINE-TRNA LIGASE"/>
    <property type="match status" value="1"/>
</dbReference>
<dbReference type="Pfam" id="PF03129">
    <property type="entry name" value="HGTP_anticodon"/>
    <property type="match status" value="1"/>
</dbReference>
<dbReference type="Pfam" id="PF02824">
    <property type="entry name" value="TGS"/>
    <property type="match status" value="1"/>
</dbReference>
<dbReference type="Pfam" id="PF00587">
    <property type="entry name" value="tRNA-synt_2b"/>
    <property type="match status" value="1"/>
</dbReference>
<dbReference type="Pfam" id="PF07973">
    <property type="entry name" value="tRNA_SAD"/>
    <property type="match status" value="1"/>
</dbReference>
<dbReference type="PRINTS" id="PR01047">
    <property type="entry name" value="TRNASYNTHTHR"/>
</dbReference>
<dbReference type="SMART" id="SM00863">
    <property type="entry name" value="tRNA_SAD"/>
    <property type="match status" value="1"/>
</dbReference>
<dbReference type="SUPFAM" id="SSF52954">
    <property type="entry name" value="Class II aaRS ABD-related"/>
    <property type="match status" value="1"/>
</dbReference>
<dbReference type="SUPFAM" id="SSF55681">
    <property type="entry name" value="Class II aaRS and biotin synthetases"/>
    <property type="match status" value="1"/>
</dbReference>
<dbReference type="SUPFAM" id="SSF81271">
    <property type="entry name" value="TGS-like"/>
    <property type="match status" value="1"/>
</dbReference>
<dbReference type="SUPFAM" id="SSF55186">
    <property type="entry name" value="ThrRS/AlaRS common domain"/>
    <property type="match status" value="1"/>
</dbReference>
<dbReference type="PROSITE" id="PS50862">
    <property type="entry name" value="AA_TRNA_LIGASE_II"/>
    <property type="match status" value="1"/>
</dbReference>
<dbReference type="PROSITE" id="PS51880">
    <property type="entry name" value="TGS"/>
    <property type="match status" value="1"/>
</dbReference>
<gene>
    <name evidence="1" type="primary">thrS</name>
    <name type="ordered locus">SAS1611</name>
</gene>
<comment type="function">
    <text evidence="1">Catalyzes the attachment of threonine to tRNA(Thr) in a two-step reaction: L-threonine is first activated by ATP to form Thr-AMP and then transferred to the acceptor end of tRNA(Thr). Also edits incorrectly charged L-seryl-tRNA(Thr).</text>
</comment>
<comment type="catalytic activity">
    <reaction evidence="1">
        <text>tRNA(Thr) + L-threonine + ATP = L-threonyl-tRNA(Thr) + AMP + diphosphate + H(+)</text>
        <dbReference type="Rhea" id="RHEA:24624"/>
        <dbReference type="Rhea" id="RHEA-COMP:9670"/>
        <dbReference type="Rhea" id="RHEA-COMP:9704"/>
        <dbReference type="ChEBI" id="CHEBI:15378"/>
        <dbReference type="ChEBI" id="CHEBI:30616"/>
        <dbReference type="ChEBI" id="CHEBI:33019"/>
        <dbReference type="ChEBI" id="CHEBI:57926"/>
        <dbReference type="ChEBI" id="CHEBI:78442"/>
        <dbReference type="ChEBI" id="CHEBI:78534"/>
        <dbReference type="ChEBI" id="CHEBI:456215"/>
        <dbReference type="EC" id="6.1.1.3"/>
    </reaction>
</comment>
<comment type="cofactor">
    <cofactor evidence="1">
        <name>Zn(2+)</name>
        <dbReference type="ChEBI" id="CHEBI:29105"/>
    </cofactor>
    <text evidence="1">Binds 1 zinc ion per subunit.</text>
</comment>
<comment type="subunit">
    <text evidence="1">Homodimer.</text>
</comment>
<comment type="subcellular location">
    <subcellularLocation>
        <location evidence="1">Cytoplasm</location>
    </subcellularLocation>
</comment>
<comment type="similarity">
    <text evidence="1">Belongs to the class-II aminoacyl-tRNA synthetase family.</text>
</comment>
<accession>Q6G8P3</accession>
<keyword id="KW-0030">Aminoacyl-tRNA synthetase</keyword>
<keyword id="KW-0067">ATP-binding</keyword>
<keyword id="KW-0963">Cytoplasm</keyword>
<keyword id="KW-0436">Ligase</keyword>
<keyword id="KW-0479">Metal-binding</keyword>
<keyword id="KW-0547">Nucleotide-binding</keyword>
<keyword id="KW-0648">Protein biosynthesis</keyword>
<keyword id="KW-0694">RNA-binding</keyword>
<keyword id="KW-0820">tRNA-binding</keyword>
<keyword id="KW-0862">Zinc</keyword>